<gene>
    <name evidence="1" type="primary">panC1</name>
    <name type="ordered locus">blr2102</name>
    <name type="ORF">id912</name>
</gene>
<proteinExistence type="inferred from homology"/>
<dbReference type="EC" id="6.3.2.1" evidence="1"/>
<dbReference type="EMBL" id="AH010242">
    <property type="protein sequence ID" value="AAG61078.1"/>
    <property type="molecule type" value="Genomic_DNA"/>
</dbReference>
<dbReference type="EMBL" id="BA000040">
    <property type="protein sequence ID" value="BAC47367.1"/>
    <property type="molecule type" value="Genomic_DNA"/>
</dbReference>
<dbReference type="RefSeq" id="NP_768742.1">
    <property type="nucleotide sequence ID" value="NC_004463.1"/>
</dbReference>
<dbReference type="SMR" id="Q9AMR9"/>
<dbReference type="FunCoup" id="Q9AMR9">
    <property type="interactions" value="682"/>
</dbReference>
<dbReference type="STRING" id="224911.AAV28_07345"/>
<dbReference type="EnsemblBacteria" id="BAC47367">
    <property type="protein sequence ID" value="BAC47367"/>
    <property type="gene ID" value="BAC47367"/>
</dbReference>
<dbReference type="KEGG" id="bja:blr2102"/>
<dbReference type="PATRIC" id="fig|224911.44.peg.1612"/>
<dbReference type="eggNOG" id="COG0414">
    <property type="taxonomic scope" value="Bacteria"/>
</dbReference>
<dbReference type="HOGENOM" id="CLU_047148_0_0_5"/>
<dbReference type="InParanoid" id="Q9AMR9"/>
<dbReference type="OrthoDB" id="9773087at2"/>
<dbReference type="PhylomeDB" id="Q9AMR9"/>
<dbReference type="UniPathway" id="UPA00028">
    <property type="reaction ID" value="UER00005"/>
</dbReference>
<dbReference type="Proteomes" id="UP000002526">
    <property type="component" value="Chromosome"/>
</dbReference>
<dbReference type="GO" id="GO:0005829">
    <property type="term" value="C:cytosol"/>
    <property type="evidence" value="ECO:0000318"/>
    <property type="project" value="GO_Central"/>
</dbReference>
<dbReference type="GO" id="GO:0005524">
    <property type="term" value="F:ATP binding"/>
    <property type="evidence" value="ECO:0007669"/>
    <property type="project" value="UniProtKB-KW"/>
</dbReference>
<dbReference type="GO" id="GO:0004592">
    <property type="term" value="F:pantoate-beta-alanine ligase activity"/>
    <property type="evidence" value="ECO:0000318"/>
    <property type="project" value="GO_Central"/>
</dbReference>
<dbReference type="GO" id="GO:0015940">
    <property type="term" value="P:pantothenate biosynthetic process"/>
    <property type="evidence" value="ECO:0000318"/>
    <property type="project" value="GO_Central"/>
</dbReference>
<dbReference type="CDD" id="cd00560">
    <property type="entry name" value="PanC"/>
    <property type="match status" value="1"/>
</dbReference>
<dbReference type="FunFam" id="3.30.1300.10:FF:000001">
    <property type="entry name" value="Pantothenate synthetase"/>
    <property type="match status" value="1"/>
</dbReference>
<dbReference type="FunFam" id="3.40.50.620:FF:000013">
    <property type="entry name" value="Pantothenate synthetase"/>
    <property type="match status" value="1"/>
</dbReference>
<dbReference type="Gene3D" id="3.40.50.620">
    <property type="entry name" value="HUPs"/>
    <property type="match status" value="1"/>
</dbReference>
<dbReference type="Gene3D" id="3.30.1300.10">
    <property type="entry name" value="Pantoate-beta-alanine ligase, C-terminal domain"/>
    <property type="match status" value="1"/>
</dbReference>
<dbReference type="HAMAP" id="MF_00158">
    <property type="entry name" value="PanC"/>
    <property type="match status" value="1"/>
</dbReference>
<dbReference type="InterPro" id="IPR003721">
    <property type="entry name" value="Pantoate_ligase"/>
</dbReference>
<dbReference type="InterPro" id="IPR042176">
    <property type="entry name" value="Pantoate_ligase_C"/>
</dbReference>
<dbReference type="InterPro" id="IPR014729">
    <property type="entry name" value="Rossmann-like_a/b/a_fold"/>
</dbReference>
<dbReference type="NCBIfam" id="TIGR00018">
    <property type="entry name" value="panC"/>
    <property type="match status" value="1"/>
</dbReference>
<dbReference type="PANTHER" id="PTHR21299">
    <property type="entry name" value="CYTIDYLATE KINASE/PANTOATE-BETA-ALANINE LIGASE"/>
    <property type="match status" value="1"/>
</dbReference>
<dbReference type="PANTHER" id="PTHR21299:SF1">
    <property type="entry name" value="PANTOATE--BETA-ALANINE LIGASE"/>
    <property type="match status" value="1"/>
</dbReference>
<dbReference type="Pfam" id="PF02569">
    <property type="entry name" value="Pantoate_ligase"/>
    <property type="match status" value="1"/>
</dbReference>
<dbReference type="SUPFAM" id="SSF52374">
    <property type="entry name" value="Nucleotidylyl transferase"/>
    <property type="match status" value="1"/>
</dbReference>
<sequence length="283" mass="31322">MKVITKVAELRRALADVRNAEKRIGFVPTMGYLHDGHLALISASREHCDVTVVSIFVNPTQFGPNEDLSRYPRDFARDEALCGSAGVSIIFAPSAEEIYPAQFESFVEPGELAKPLCGAFRPGHFRGVATVVCKLFNMVQPDVAYFGQKDFQQCAVIRRMTVDLNLPIEIVTVPTVREPDGLAMSSRNRYLCPEERDRSLAISRGLFAAAHEFASGERDAATLIALARRHLERVDRLQYLELVDPGTLRIADSPLRYPAVLCVAAYVGSTRLIDNVVLSWSPS</sequence>
<protein>
    <recommendedName>
        <fullName evidence="1">Pantothenate synthetase 1</fullName>
        <shortName evidence="1">PS 1</shortName>
        <ecNumber evidence="1">6.3.2.1</ecNumber>
    </recommendedName>
    <alternativeName>
        <fullName evidence="1">Pantoate--beta-alanine ligase 1</fullName>
    </alternativeName>
    <alternativeName>
        <fullName evidence="1">Pantoate-activating enzyme 1</fullName>
    </alternativeName>
</protein>
<evidence type="ECO:0000255" key="1">
    <source>
        <dbReference type="HAMAP-Rule" id="MF_00158"/>
    </source>
</evidence>
<name>PANC1_BRADU</name>
<keyword id="KW-0067">ATP-binding</keyword>
<keyword id="KW-0963">Cytoplasm</keyword>
<keyword id="KW-0436">Ligase</keyword>
<keyword id="KW-0547">Nucleotide-binding</keyword>
<keyword id="KW-0566">Pantothenate biosynthesis</keyword>
<keyword id="KW-1185">Reference proteome</keyword>
<accession>Q9AMR9</accession>
<comment type="function">
    <text evidence="1">Catalyzes the condensation of pantoate with beta-alanine in an ATP-dependent reaction via a pantoyl-adenylate intermediate.</text>
</comment>
<comment type="catalytic activity">
    <reaction evidence="1">
        <text>(R)-pantoate + beta-alanine + ATP = (R)-pantothenate + AMP + diphosphate + H(+)</text>
        <dbReference type="Rhea" id="RHEA:10912"/>
        <dbReference type="ChEBI" id="CHEBI:15378"/>
        <dbReference type="ChEBI" id="CHEBI:15980"/>
        <dbReference type="ChEBI" id="CHEBI:29032"/>
        <dbReference type="ChEBI" id="CHEBI:30616"/>
        <dbReference type="ChEBI" id="CHEBI:33019"/>
        <dbReference type="ChEBI" id="CHEBI:57966"/>
        <dbReference type="ChEBI" id="CHEBI:456215"/>
        <dbReference type="EC" id="6.3.2.1"/>
    </reaction>
</comment>
<comment type="pathway">
    <text evidence="1">Cofactor biosynthesis; (R)-pantothenate biosynthesis; (R)-pantothenate from (R)-pantoate and beta-alanine: step 1/1.</text>
</comment>
<comment type="subunit">
    <text evidence="1">Homodimer.</text>
</comment>
<comment type="subcellular location">
    <subcellularLocation>
        <location evidence="1">Cytoplasm</location>
    </subcellularLocation>
</comment>
<comment type="miscellaneous">
    <text evidence="1">The reaction proceeds by a bi uni uni bi ping pong mechanism.</text>
</comment>
<comment type="similarity">
    <text evidence="1">Belongs to the pantothenate synthetase family.</text>
</comment>
<reference key="1">
    <citation type="journal article" date="2001" name="J. Bacteriol.">
        <title>Potential symbiosis-specific genes uncovered by sequencing a 410-kb DNA region of the Bradyrhizobium japonicum chromosome.</title>
        <authorList>
            <person name="Goettfert M."/>
            <person name="Roethlisberger S."/>
            <person name="Kuendig C."/>
            <person name="Beck C."/>
            <person name="Marty R."/>
            <person name="Hennecke H."/>
        </authorList>
    </citation>
    <scope>NUCLEOTIDE SEQUENCE [GENOMIC DNA]</scope>
    <source>
        <strain>USDA 110spc4</strain>
    </source>
</reference>
<reference key="2">
    <citation type="journal article" date="2002" name="DNA Res.">
        <title>Complete genomic sequence of nitrogen-fixing symbiotic bacterium Bradyrhizobium japonicum USDA110.</title>
        <authorList>
            <person name="Kaneko T."/>
            <person name="Nakamura Y."/>
            <person name="Sato S."/>
            <person name="Minamisawa K."/>
            <person name="Uchiumi T."/>
            <person name="Sasamoto S."/>
            <person name="Watanabe A."/>
            <person name="Idesawa K."/>
            <person name="Iriguchi M."/>
            <person name="Kawashima K."/>
            <person name="Kohara M."/>
            <person name="Matsumoto M."/>
            <person name="Shimpo S."/>
            <person name="Tsuruoka H."/>
            <person name="Wada T."/>
            <person name="Yamada M."/>
            <person name="Tabata S."/>
        </authorList>
    </citation>
    <scope>NUCLEOTIDE SEQUENCE [LARGE SCALE GENOMIC DNA]</scope>
    <source>
        <strain>JCM 10833 / BCRC 13528 / IAM 13628 / NBRC 14792 / USDA 110</strain>
    </source>
</reference>
<feature type="chain" id="PRO_0000128208" description="Pantothenate synthetase 1">
    <location>
        <begin position="1"/>
        <end position="283"/>
    </location>
</feature>
<feature type="active site" description="Proton donor" evidence="1">
    <location>
        <position position="37"/>
    </location>
</feature>
<feature type="binding site" evidence="1">
    <location>
        <begin position="30"/>
        <end position="37"/>
    </location>
    <ligand>
        <name>ATP</name>
        <dbReference type="ChEBI" id="CHEBI:30616"/>
    </ligand>
</feature>
<feature type="binding site" evidence="1">
    <location>
        <position position="61"/>
    </location>
    <ligand>
        <name>(R)-pantoate</name>
        <dbReference type="ChEBI" id="CHEBI:15980"/>
    </ligand>
</feature>
<feature type="binding site" evidence="1">
    <location>
        <position position="61"/>
    </location>
    <ligand>
        <name>beta-alanine</name>
        <dbReference type="ChEBI" id="CHEBI:57966"/>
    </ligand>
</feature>
<feature type="binding site" evidence="1">
    <location>
        <begin position="147"/>
        <end position="150"/>
    </location>
    <ligand>
        <name>ATP</name>
        <dbReference type="ChEBI" id="CHEBI:30616"/>
    </ligand>
</feature>
<feature type="binding site" evidence="1">
    <location>
        <position position="153"/>
    </location>
    <ligand>
        <name>(R)-pantoate</name>
        <dbReference type="ChEBI" id="CHEBI:15980"/>
    </ligand>
</feature>
<feature type="binding site" evidence="1">
    <location>
        <position position="176"/>
    </location>
    <ligand>
        <name>ATP</name>
        <dbReference type="ChEBI" id="CHEBI:30616"/>
    </ligand>
</feature>
<feature type="binding site" evidence="1">
    <location>
        <begin position="184"/>
        <end position="187"/>
    </location>
    <ligand>
        <name>ATP</name>
        <dbReference type="ChEBI" id="CHEBI:30616"/>
    </ligand>
</feature>
<organism>
    <name type="scientific">Bradyrhizobium diazoefficiens (strain JCM 10833 / BCRC 13528 / IAM 13628 / NBRC 14792 / USDA 110)</name>
    <dbReference type="NCBI Taxonomy" id="224911"/>
    <lineage>
        <taxon>Bacteria</taxon>
        <taxon>Pseudomonadati</taxon>
        <taxon>Pseudomonadota</taxon>
        <taxon>Alphaproteobacteria</taxon>
        <taxon>Hyphomicrobiales</taxon>
        <taxon>Nitrobacteraceae</taxon>
        <taxon>Bradyrhizobium</taxon>
    </lineage>
</organism>